<keyword id="KW-0963">Cytoplasm</keyword>
<keyword id="KW-0227">DNA damage</keyword>
<keyword id="KW-0233">DNA recombination</keyword>
<keyword id="KW-0234">DNA repair</keyword>
<keyword id="KW-0255">Endonuclease</keyword>
<keyword id="KW-0378">Hydrolase</keyword>
<keyword id="KW-0460">Magnesium</keyword>
<keyword id="KW-0479">Metal-binding</keyword>
<keyword id="KW-0540">Nuclease</keyword>
<keyword id="KW-1185">Reference proteome</keyword>
<feature type="chain" id="PRO_0000212313" description="Holliday junction resolvase RecU">
    <location>
        <begin position="1"/>
        <end position="198"/>
    </location>
</feature>
<feature type="region of interest" description="Disordered" evidence="3">
    <location>
        <begin position="1"/>
        <end position="22"/>
    </location>
</feature>
<feature type="compositionally biased region" description="Polar residues" evidence="3">
    <location>
        <begin position="11"/>
        <end position="22"/>
    </location>
</feature>
<feature type="binding site" evidence="1">
    <location>
        <position position="81"/>
    </location>
    <ligand>
        <name>Mg(2+)</name>
        <dbReference type="ChEBI" id="CHEBI:18420"/>
    </ligand>
</feature>
<feature type="binding site" evidence="1">
    <location>
        <position position="83"/>
    </location>
    <ligand>
        <name>Mg(2+)</name>
        <dbReference type="ChEBI" id="CHEBI:18420"/>
    </ligand>
</feature>
<feature type="binding site" evidence="1">
    <location>
        <position position="96"/>
    </location>
    <ligand>
        <name>Mg(2+)</name>
        <dbReference type="ChEBI" id="CHEBI:18420"/>
    </ligand>
</feature>
<feature type="binding site" evidence="1">
    <location>
        <position position="115"/>
    </location>
    <ligand>
        <name>Mg(2+)</name>
        <dbReference type="ChEBI" id="CHEBI:18420"/>
    </ligand>
</feature>
<feature type="site" description="Transition state stabilizer" evidence="1">
    <location>
        <position position="98"/>
    </location>
</feature>
<gene>
    <name type="primary">recU</name>
    <name type="ordered locus">spr0330</name>
</gene>
<accession>P0A456</accession>
<accession>P38034</accession>
<organism>
    <name type="scientific">Streptococcus pneumoniae (strain ATCC BAA-255 / R6)</name>
    <dbReference type="NCBI Taxonomy" id="171101"/>
    <lineage>
        <taxon>Bacteria</taxon>
        <taxon>Bacillati</taxon>
        <taxon>Bacillota</taxon>
        <taxon>Bacilli</taxon>
        <taxon>Lactobacillales</taxon>
        <taxon>Streptococcaceae</taxon>
        <taxon>Streptococcus</taxon>
    </lineage>
</organism>
<dbReference type="EC" id="3.1.21.10" evidence="2"/>
<dbReference type="EMBL" id="M90527">
    <property type="protein sequence ID" value="AAA26955.1"/>
    <property type="molecule type" value="Genomic_DNA"/>
</dbReference>
<dbReference type="EMBL" id="AE007317">
    <property type="protein sequence ID" value="AAK99134.1"/>
    <property type="molecule type" value="Genomic_DNA"/>
</dbReference>
<dbReference type="PIR" id="B97913">
    <property type="entry name" value="B97913"/>
</dbReference>
<dbReference type="RefSeq" id="NP_357924.1">
    <property type="nucleotide sequence ID" value="NC_003098.1"/>
</dbReference>
<dbReference type="RefSeq" id="WP_000248787.1">
    <property type="nucleotide sequence ID" value="NC_003098.1"/>
</dbReference>
<dbReference type="SMR" id="P0A456"/>
<dbReference type="STRING" id="171101.spr0330"/>
<dbReference type="GeneID" id="45652167"/>
<dbReference type="KEGG" id="spr:spr0330"/>
<dbReference type="PATRIC" id="fig|171101.6.peg.369"/>
<dbReference type="eggNOG" id="COG3331">
    <property type="taxonomic scope" value="Bacteria"/>
</dbReference>
<dbReference type="HOGENOM" id="CLU_096340_0_0_9"/>
<dbReference type="Proteomes" id="UP000000586">
    <property type="component" value="Chromosome"/>
</dbReference>
<dbReference type="GO" id="GO:0005737">
    <property type="term" value="C:cytoplasm"/>
    <property type="evidence" value="ECO:0007669"/>
    <property type="project" value="UniProtKB-SubCell"/>
</dbReference>
<dbReference type="GO" id="GO:0004519">
    <property type="term" value="F:endonuclease activity"/>
    <property type="evidence" value="ECO:0007669"/>
    <property type="project" value="UniProtKB-UniRule"/>
</dbReference>
<dbReference type="GO" id="GO:0000287">
    <property type="term" value="F:magnesium ion binding"/>
    <property type="evidence" value="ECO:0007669"/>
    <property type="project" value="UniProtKB-UniRule"/>
</dbReference>
<dbReference type="GO" id="GO:0003676">
    <property type="term" value="F:nucleic acid binding"/>
    <property type="evidence" value="ECO:0007669"/>
    <property type="project" value="InterPro"/>
</dbReference>
<dbReference type="GO" id="GO:0007059">
    <property type="term" value="P:chromosome segregation"/>
    <property type="evidence" value="ECO:0007669"/>
    <property type="project" value="UniProtKB-UniRule"/>
</dbReference>
<dbReference type="GO" id="GO:0006310">
    <property type="term" value="P:DNA recombination"/>
    <property type="evidence" value="ECO:0007669"/>
    <property type="project" value="UniProtKB-UniRule"/>
</dbReference>
<dbReference type="GO" id="GO:0006281">
    <property type="term" value="P:DNA repair"/>
    <property type="evidence" value="ECO:0007669"/>
    <property type="project" value="UniProtKB-UniRule"/>
</dbReference>
<dbReference type="CDD" id="cd22354">
    <property type="entry name" value="RecU-like"/>
    <property type="match status" value="1"/>
</dbReference>
<dbReference type="Gene3D" id="3.40.1350.10">
    <property type="match status" value="1"/>
</dbReference>
<dbReference type="HAMAP" id="MF_00130">
    <property type="entry name" value="RecU"/>
    <property type="match status" value="1"/>
</dbReference>
<dbReference type="InterPro" id="IPR004612">
    <property type="entry name" value="Resolv_RecU"/>
</dbReference>
<dbReference type="InterPro" id="IPR011335">
    <property type="entry name" value="Restrct_endonuc-II-like"/>
</dbReference>
<dbReference type="InterPro" id="IPR011856">
    <property type="entry name" value="tRNA_endonuc-like_dom_sf"/>
</dbReference>
<dbReference type="NCBIfam" id="NF002580">
    <property type="entry name" value="PRK02234.1-1"/>
    <property type="match status" value="1"/>
</dbReference>
<dbReference type="NCBIfam" id="NF002584">
    <property type="entry name" value="PRK02234.1-5"/>
    <property type="match status" value="1"/>
</dbReference>
<dbReference type="NCBIfam" id="TIGR00648">
    <property type="entry name" value="recU"/>
    <property type="match status" value="1"/>
</dbReference>
<dbReference type="Pfam" id="PF03838">
    <property type="entry name" value="RecU"/>
    <property type="match status" value="1"/>
</dbReference>
<dbReference type="PIRSF" id="PIRSF037785">
    <property type="entry name" value="RecU"/>
    <property type="match status" value="1"/>
</dbReference>
<dbReference type="SUPFAM" id="SSF52980">
    <property type="entry name" value="Restriction endonuclease-like"/>
    <property type="match status" value="1"/>
</dbReference>
<comment type="function">
    <text evidence="1">Endonuclease that resolves Holliday junction intermediates in genetic recombination. Cleaves mobile four-strand junctions by introducing symmetrical nicks in paired strands. Promotes annealing of linear ssDNA with homologous dsDNA. Required for DNA repair, homologous recombination and chromosome segregation (By similarity).</text>
</comment>
<comment type="catalytic activity">
    <reaction evidence="2">
        <text>Endonucleolytic cleavage at a junction such as a reciprocal single-stranded crossover between two homologous DNA duplexes (Holliday junction).</text>
        <dbReference type="EC" id="3.1.21.10"/>
    </reaction>
</comment>
<comment type="cofactor">
    <cofactor evidence="1">
        <name>Mg(2+)</name>
        <dbReference type="ChEBI" id="CHEBI:18420"/>
    </cofactor>
    <text evidence="1">Binds 1 Mg(2+) ion per subunit.</text>
</comment>
<comment type="subcellular location">
    <subcellularLocation>
        <location evidence="4">Cytoplasm</location>
    </subcellularLocation>
</comment>
<comment type="similarity">
    <text evidence="4">Belongs to the RecU family.</text>
</comment>
<name>RECU_STRR6</name>
<protein>
    <recommendedName>
        <fullName>Holliday junction resolvase RecU</fullName>
        <ecNumber evidence="2">3.1.21.10</ecNumber>
    </recommendedName>
    <alternativeName>
        <fullName>Recombination protein U homolog</fullName>
    </alternativeName>
</protein>
<evidence type="ECO:0000250" key="1"/>
<evidence type="ECO:0000255" key="2">
    <source>
        <dbReference type="HAMAP-Rule" id="MF_00130"/>
    </source>
</evidence>
<evidence type="ECO:0000256" key="3">
    <source>
        <dbReference type="SAM" id="MobiDB-lite"/>
    </source>
</evidence>
<evidence type="ECO:0000305" key="4"/>
<reference key="1">
    <citation type="journal article" date="1992" name="J. Bacteriol.">
        <title>Nucleotide sequences of genes encoding penicillin-binding proteins from Streptococcus pneumoniae and Streptococcus oralis with high homology to Escherichia coli penicillin-binding proteins 1a and 1b.</title>
        <authorList>
            <person name="Martin C."/>
            <person name="Briese T."/>
            <person name="Hakenbeck R."/>
        </authorList>
    </citation>
    <scope>NUCLEOTIDE SEQUENCE [GENOMIC DNA]</scope>
</reference>
<reference key="2">
    <citation type="journal article" date="2001" name="J. Bacteriol.">
        <title>Genome of the bacterium Streptococcus pneumoniae strain R6.</title>
        <authorList>
            <person name="Hoskins J."/>
            <person name="Alborn W.E. Jr."/>
            <person name="Arnold J."/>
            <person name="Blaszczak L.C."/>
            <person name="Burgett S."/>
            <person name="DeHoff B.S."/>
            <person name="Estrem S.T."/>
            <person name="Fritz L."/>
            <person name="Fu D.-J."/>
            <person name="Fuller W."/>
            <person name="Geringer C."/>
            <person name="Gilmour R."/>
            <person name="Glass J.S."/>
            <person name="Khoja H."/>
            <person name="Kraft A.R."/>
            <person name="Lagace R.E."/>
            <person name="LeBlanc D.J."/>
            <person name="Lee L.N."/>
            <person name="Lefkowitz E.J."/>
            <person name="Lu J."/>
            <person name="Matsushima P."/>
            <person name="McAhren S.M."/>
            <person name="McHenney M."/>
            <person name="McLeaster K."/>
            <person name="Mundy C.W."/>
            <person name="Nicas T.I."/>
            <person name="Norris F.H."/>
            <person name="O'Gara M."/>
            <person name="Peery R.B."/>
            <person name="Robertson G.T."/>
            <person name="Rockey P."/>
            <person name="Sun P.-M."/>
            <person name="Winkler M.E."/>
            <person name="Yang Y."/>
            <person name="Young-Bellido M."/>
            <person name="Zhao G."/>
            <person name="Zook C.A."/>
            <person name="Baltz R.H."/>
            <person name="Jaskunas S.R."/>
            <person name="Rosteck P.R. Jr."/>
            <person name="Skatrud P.L."/>
            <person name="Glass J.I."/>
        </authorList>
    </citation>
    <scope>NUCLEOTIDE SEQUENCE [LARGE SCALE GENOMIC DNA]</scope>
    <source>
        <strain>ATCC BAA-255 / R6</strain>
    </source>
</reference>
<sequence length="198" mass="23131">MVNYPHKVSSQKRQTSLSQPKNFANRGMSFEKMINATNDYYLSQGLAVIHKKPTPIQIVQVDYPQRSRAKIVEAYFRQASTTDYSGVYNGYYIDFEVKETKQKRAIPMKNFHPHQIQHMEQVLAQQGICFVLLHFSSQQETYLLPAFDLIRFYHQDKGQKSMPLEYIREYGYEIKAGAFPQIPYLNVIKEHLLGGKTR</sequence>
<proteinExistence type="inferred from homology"/>